<sequence>IKITTMLAKLGKVLAHV</sequence>
<reference key="1">
    <citation type="journal article" date="1985" name="J. Biol. Chem.">
        <title>Bombolitins, a new class of mast cell degranulating peptides from the venom of the bumblebee Megabombus pennsylvanicus.</title>
        <authorList>
            <person name="Argiolas A."/>
            <person name="Pisano J.J."/>
        </authorList>
    </citation>
    <scope>PROTEIN SEQUENCE</scope>
    <scope>AMIDATION AT VAL-17</scope>
    <scope>SUBCELLULAR LOCATION</scope>
    <source>
        <tissue>Venom</tissue>
    </source>
</reference>
<dbReference type="PIR" id="A22595">
    <property type="entry name" value="A22595"/>
</dbReference>
<dbReference type="GO" id="GO:0005576">
    <property type="term" value="C:extracellular region"/>
    <property type="evidence" value="ECO:0007669"/>
    <property type="project" value="UniProtKB-SubCell"/>
</dbReference>
<dbReference type="GO" id="GO:0090729">
    <property type="term" value="F:toxin activity"/>
    <property type="evidence" value="ECO:0007669"/>
    <property type="project" value="UniProtKB-KW"/>
</dbReference>
<dbReference type="InterPro" id="IPR012534">
    <property type="entry name" value="Bombolitin"/>
</dbReference>
<dbReference type="Pfam" id="PF08096">
    <property type="entry name" value="Bombolitin"/>
    <property type="match status" value="1"/>
</dbReference>
<protein>
    <recommendedName>
        <fullName evidence="5">Bombolitin-1</fullName>
    </recommendedName>
    <alternativeName>
        <fullName evidence="4">Bombolitin I</fullName>
    </alternativeName>
</protein>
<name>BOL1_BOMPE</name>
<accession>P10521</accession>
<proteinExistence type="evidence at protein level"/>
<comment type="function">
    <text evidence="1 2 3">Mast cell degranulating peptide (PubMed:2578459). Its mast cell degranulation activity may be related to the activation of G-protein coupled receptors in mast cells as well as interaction with other proteins located in cell endosomal membranes in the mast cells (By similarity).</text>
</comment>
<comment type="subcellular location">
    <subcellularLocation>
        <location evidence="3">Secreted</location>
    </subcellularLocation>
</comment>
<comment type="tissue specificity">
    <text evidence="6">Expressed by the venom gland.</text>
</comment>
<comment type="similarity">
    <text evidence="5">Belongs to the MCD family. Bombolitin subfamily.</text>
</comment>
<evidence type="ECO:0000250" key="1">
    <source>
        <dbReference type="UniProtKB" id="P01514"/>
    </source>
</evidence>
<evidence type="ECO:0000250" key="2">
    <source>
        <dbReference type="UniProtKB" id="P84914"/>
    </source>
</evidence>
<evidence type="ECO:0000269" key="3">
    <source>
    </source>
</evidence>
<evidence type="ECO:0000303" key="4">
    <source>
    </source>
</evidence>
<evidence type="ECO:0000305" key="5"/>
<evidence type="ECO:0000305" key="6">
    <source>
    </source>
</evidence>
<keyword id="KW-0027">Amidation</keyword>
<keyword id="KW-0903">Direct protein sequencing</keyword>
<keyword id="KW-1213">G-protein coupled receptor impairing toxin</keyword>
<keyword id="KW-0467">Mast cell degranulation</keyword>
<keyword id="KW-0964">Secreted</keyword>
<keyword id="KW-0800">Toxin</keyword>
<feature type="peptide" id="PRO_0000044038" description="Bombolitin-1" evidence="3">
    <location>
        <begin position="1"/>
        <end position="17"/>
    </location>
</feature>
<feature type="modified residue" description="Valine amide" evidence="3">
    <location>
        <position position="17"/>
    </location>
</feature>
<organism>
    <name type="scientific">Bombus pensylvanicus</name>
    <name type="common">American bumblebee</name>
    <name type="synonym">Apis pensylvanica</name>
    <dbReference type="NCBI Taxonomy" id="28643"/>
    <lineage>
        <taxon>Eukaryota</taxon>
        <taxon>Metazoa</taxon>
        <taxon>Ecdysozoa</taxon>
        <taxon>Arthropoda</taxon>
        <taxon>Hexapoda</taxon>
        <taxon>Insecta</taxon>
        <taxon>Pterygota</taxon>
        <taxon>Neoptera</taxon>
        <taxon>Endopterygota</taxon>
        <taxon>Hymenoptera</taxon>
        <taxon>Apocrita</taxon>
        <taxon>Aculeata</taxon>
        <taxon>Apoidea</taxon>
        <taxon>Anthophila</taxon>
        <taxon>Apidae</taxon>
        <taxon>Bombus</taxon>
        <taxon>Fervidobombus</taxon>
    </lineage>
</organism>